<organism>
    <name type="scientific">Thermoanaerobacter pseudethanolicus (strain ATCC 33223 / 39E)</name>
    <name type="common">Clostridium thermohydrosulfuricum</name>
    <dbReference type="NCBI Taxonomy" id="340099"/>
    <lineage>
        <taxon>Bacteria</taxon>
        <taxon>Bacillati</taxon>
        <taxon>Bacillota</taxon>
        <taxon>Clostridia</taxon>
        <taxon>Thermoanaerobacterales</taxon>
        <taxon>Thermoanaerobacteraceae</taxon>
        <taxon>Thermoanaerobacter</taxon>
    </lineage>
</organism>
<protein>
    <recommendedName>
        <fullName evidence="1">Elongation factor Ts</fullName>
        <shortName evidence="1">EF-Ts</shortName>
    </recommendedName>
</protein>
<name>EFTS_THEP3</name>
<reference key="1">
    <citation type="submission" date="2008-01" db="EMBL/GenBank/DDBJ databases">
        <title>Complete sequence of Thermoanaerobacter pseudethanolicus 39E.</title>
        <authorList>
            <person name="Copeland A."/>
            <person name="Lucas S."/>
            <person name="Lapidus A."/>
            <person name="Barry K."/>
            <person name="Glavina del Rio T."/>
            <person name="Dalin E."/>
            <person name="Tice H."/>
            <person name="Pitluck S."/>
            <person name="Bruce D."/>
            <person name="Goodwin L."/>
            <person name="Saunders E."/>
            <person name="Brettin T."/>
            <person name="Detter J.C."/>
            <person name="Han C."/>
            <person name="Schmutz J."/>
            <person name="Larimer F."/>
            <person name="Land M."/>
            <person name="Hauser L."/>
            <person name="Kyrpides N."/>
            <person name="Lykidis A."/>
            <person name="Hemme C."/>
            <person name="Fields M.W."/>
            <person name="He Z."/>
            <person name="Zhou J."/>
            <person name="Richardson P."/>
        </authorList>
    </citation>
    <scope>NUCLEOTIDE SEQUENCE [LARGE SCALE GENOMIC DNA]</scope>
    <source>
        <strain>ATCC 33223 / DSM 2355 / 39E</strain>
    </source>
</reference>
<gene>
    <name evidence="1" type="primary">tsf</name>
    <name type="ordered locus">Teth39_1224</name>
</gene>
<keyword id="KW-0963">Cytoplasm</keyword>
<keyword id="KW-0251">Elongation factor</keyword>
<keyword id="KW-0648">Protein biosynthesis</keyword>
<keyword id="KW-1185">Reference proteome</keyword>
<feature type="chain" id="PRO_1000189891" description="Elongation factor Ts">
    <location>
        <begin position="1"/>
        <end position="204"/>
    </location>
</feature>
<feature type="region of interest" description="Involved in Mg(2+) ion dislocation from EF-Tu" evidence="1">
    <location>
        <begin position="80"/>
        <end position="83"/>
    </location>
</feature>
<dbReference type="EMBL" id="CP000924">
    <property type="protein sequence ID" value="ABY94878.1"/>
    <property type="molecule type" value="Genomic_DNA"/>
</dbReference>
<dbReference type="RefSeq" id="WP_003866734.1">
    <property type="nucleotide sequence ID" value="NC_010321.1"/>
</dbReference>
<dbReference type="SMR" id="B0K9R5"/>
<dbReference type="STRING" id="340099.Teth39_1224"/>
<dbReference type="KEGG" id="tpd:Teth39_1224"/>
<dbReference type="eggNOG" id="COG0264">
    <property type="taxonomic scope" value="Bacteria"/>
</dbReference>
<dbReference type="HOGENOM" id="CLU_047155_1_1_9"/>
<dbReference type="Proteomes" id="UP000002156">
    <property type="component" value="Chromosome"/>
</dbReference>
<dbReference type="GO" id="GO:0005737">
    <property type="term" value="C:cytoplasm"/>
    <property type="evidence" value="ECO:0007669"/>
    <property type="project" value="UniProtKB-SubCell"/>
</dbReference>
<dbReference type="GO" id="GO:0003746">
    <property type="term" value="F:translation elongation factor activity"/>
    <property type="evidence" value="ECO:0007669"/>
    <property type="project" value="UniProtKB-UniRule"/>
</dbReference>
<dbReference type="CDD" id="cd14275">
    <property type="entry name" value="UBA_EF-Ts"/>
    <property type="match status" value="1"/>
</dbReference>
<dbReference type="FunFam" id="1.10.286.20:FF:000001">
    <property type="entry name" value="Elongation factor Ts"/>
    <property type="match status" value="1"/>
</dbReference>
<dbReference type="FunFam" id="1.10.8.10:FF:000001">
    <property type="entry name" value="Elongation factor Ts"/>
    <property type="match status" value="1"/>
</dbReference>
<dbReference type="Gene3D" id="1.10.286.20">
    <property type="match status" value="1"/>
</dbReference>
<dbReference type="Gene3D" id="1.10.8.10">
    <property type="entry name" value="DNA helicase RuvA subunit, C-terminal domain"/>
    <property type="match status" value="1"/>
</dbReference>
<dbReference type="Gene3D" id="3.30.479.20">
    <property type="entry name" value="Elongation factor Ts, dimerisation domain"/>
    <property type="match status" value="1"/>
</dbReference>
<dbReference type="HAMAP" id="MF_00050">
    <property type="entry name" value="EF_Ts"/>
    <property type="match status" value="1"/>
</dbReference>
<dbReference type="InterPro" id="IPR036402">
    <property type="entry name" value="EF-Ts_dimer_sf"/>
</dbReference>
<dbReference type="InterPro" id="IPR001816">
    <property type="entry name" value="Transl_elong_EFTs/EF1B"/>
</dbReference>
<dbReference type="InterPro" id="IPR014039">
    <property type="entry name" value="Transl_elong_EFTs/EF1B_dimer"/>
</dbReference>
<dbReference type="InterPro" id="IPR018101">
    <property type="entry name" value="Transl_elong_Ts_CS"/>
</dbReference>
<dbReference type="InterPro" id="IPR009060">
    <property type="entry name" value="UBA-like_sf"/>
</dbReference>
<dbReference type="NCBIfam" id="TIGR00116">
    <property type="entry name" value="tsf"/>
    <property type="match status" value="2"/>
</dbReference>
<dbReference type="PANTHER" id="PTHR11741">
    <property type="entry name" value="ELONGATION FACTOR TS"/>
    <property type="match status" value="1"/>
</dbReference>
<dbReference type="PANTHER" id="PTHR11741:SF0">
    <property type="entry name" value="ELONGATION FACTOR TS, MITOCHONDRIAL"/>
    <property type="match status" value="1"/>
</dbReference>
<dbReference type="Pfam" id="PF00889">
    <property type="entry name" value="EF_TS"/>
    <property type="match status" value="1"/>
</dbReference>
<dbReference type="SUPFAM" id="SSF54713">
    <property type="entry name" value="Elongation factor Ts (EF-Ts), dimerisation domain"/>
    <property type="match status" value="1"/>
</dbReference>
<dbReference type="SUPFAM" id="SSF46934">
    <property type="entry name" value="UBA-like"/>
    <property type="match status" value="1"/>
</dbReference>
<dbReference type="PROSITE" id="PS01126">
    <property type="entry name" value="EF_TS_1"/>
    <property type="match status" value="1"/>
</dbReference>
<dbReference type="PROSITE" id="PS01127">
    <property type="entry name" value="EF_TS_2"/>
    <property type="match status" value="1"/>
</dbReference>
<accession>B0K9R5</accession>
<evidence type="ECO:0000255" key="1">
    <source>
        <dbReference type="HAMAP-Rule" id="MF_00050"/>
    </source>
</evidence>
<sequence>MISAQAVKELRERTGAGMMDCKKALMEANGDMEKAIDILREKGLAAAAKKAGRVANEGLVDAYIHSGGRIGVLVEVNCETDFVANTDEFKNFVKEICMQIAAANPKYISREDVPQAVLEKEREILKAQALNEGKPQNVVDRIVEGRIEKFYKENCLLEQEYIRDPEKTVKDLLNETIAKLGENIVIRRFVRFERGEGIETSSNE</sequence>
<proteinExistence type="inferred from homology"/>
<comment type="function">
    <text evidence="1">Associates with the EF-Tu.GDP complex and induces the exchange of GDP to GTP. It remains bound to the aminoacyl-tRNA.EF-Tu.GTP complex up to the GTP hydrolysis stage on the ribosome.</text>
</comment>
<comment type="subcellular location">
    <subcellularLocation>
        <location evidence="1">Cytoplasm</location>
    </subcellularLocation>
</comment>
<comment type="similarity">
    <text evidence="1">Belongs to the EF-Ts family.</text>
</comment>